<accession>P91869</accession>
<accession>I2HAC0</accession>
<gene>
    <name evidence="6" type="primary">mdt-31</name>
    <name evidence="2" type="synonym">soh-1</name>
    <name evidence="6" type="ORF">F32H2.2</name>
</gene>
<keyword id="KW-0010">Activator</keyword>
<keyword id="KW-0025">Alternative splicing</keyword>
<keyword id="KW-0539">Nucleus</keyword>
<keyword id="KW-1185">Reference proteome</keyword>
<keyword id="KW-0804">Transcription</keyword>
<keyword id="KW-0805">Transcription regulation</keyword>
<proteinExistence type="inferred from homology"/>
<organism>
    <name type="scientific">Caenorhabditis elegans</name>
    <dbReference type="NCBI Taxonomy" id="6239"/>
    <lineage>
        <taxon>Eukaryota</taxon>
        <taxon>Metazoa</taxon>
        <taxon>Ecdysozoa</taxon>
        <taxon>Nematoda</taxon>
        <taxon>Chromadorea</taxon>
        <taxon>Rhabditida</taxon>
        <taxon>Rhabditina</taxon>
        <taxon>Rhabditomorpha</taxon>
        <taxon>Rhabditoidea</taxon>
        <taxon>Rhabditidae</taxon>
        <taxon>Peloderinae</taxon>
        <taxon>Caenorhabditis</taxon>
    </lineage>
</organism>
<reference key="1">
    <citation type="journal article" date="1998" name="Science">
        <title>Genome sequence of the nematode C. elegans: a platform for investigating biology.</title>
        <authorList>
            <consortium name="The C. elegans sequencing consortium"/>
        </authorList>
    </citation>
    <scope>NUCLEOTIDE SEQUENCE [LARGE SCALE GENOMIC DNA]</scope>
    <source>
        <strain>Bristol N2</strain>
    </source>
</reference>
<protein>
    <recommendedName>
        <fullName>Mediator of RNA polymerase II transcription subunit 31</fullName>
    </recommendedName>
    <alternativeName>
        <fullName>Mediator complex subunit 31</fullName>
    </alternativeName>
    <alternativeName>
        <fullName>Mediator complex subunit soh-1</fullName>
    </alternativeName>
</protein>
<feature type="chain" id="PRO_0000212529" description="Mediator of RNA polymerase II transcription subunit 31">
    <location>
        <begin position="1"/>
        <end position="178"/>
    </location>
</feature>
<feature type="region of interest" description="Disordered" evidence="3">
    <location>
        <begin position="129"/>
        <end position="178"/>
    </location>
</feature>
<feature type="compositionally biased region" description="Acidic residues" evidence="3">
    <location>
        <begin position="129"/>
        <end position="140"/>
    </location>
</feature>
<feature type="compositionally biased region" description="Basic and acidic residues" evidence="3">
    <location>
        <begin position="155"/>
        <end position="165"/>
    </location>
</feature>
<feature type="compositionally biased region" description="Polar residues" evidence="3">
    <location>
        <begin position="166"/>
        <end position="178"/>
    </location>
</feature>
<feature type="splice variant" id="VSP_060782" description="In isoform a." evidence="4">
    <location>
        <begin position="1"/>
        <end position="13"/>
    </location>
</feature>
<evidence type="ECO:0000250" key="1"/>
<evidence type="ECO:0000250" key="2">
    <source>
        <dbReference type="UniProtKB" id="P38633"/>
    </source>
</evidence>
<evidence type="ECO:0000256" key="3">
    <source>
        <dbReference type="SAM" id="MobiDB-lite"/>
    </source>
</evidence>
<evidence type="ECO:0000305" key="4"/>
<evidence type="ECO:0000312" key="5">
    <source>
        <dbReference type="WormBase" id="F32H2.2a"/>
    </source>
</evidence>
<evidence type="ECO:0000312" key="6">
    <source>
        <dbReference type="WormBase" id="F32H2.2b"/>
    </source>
</evidence>
<sequence length="178" mass="21332">MGRFSFNRYGYNTMQMESVESEKTRFEVECEFVQALANPNYLNFLAQRGYFKEEYFVNYLKYLLYWKDPQYARCLKFPQCLHMLEALQSQQFRDSMAYGPSAKFVEDQVVLQWQFYLRKRHRLCMMPDEGQELEESEDEADIRQKDTEDEDDEETMKKPDADTAEKNSTTSTVSKKEK</sequence>
<name>MED31_CAEEL</name>
<dbReference type="EMBL" id="BX284601">
    <property type="protein sequence ID" value="CAB04242.1"/>
    <property type="molecule type" value="Genomic_DNA"/>
</dbReference>
<dbReference type="EMBL" id="BX284601">
    <property type="protein sequence ID" value="CCH63827.1"/>
    <property type="molecule type" value="Genomic_DNA"/>
</dbReference>
<dbReference type="PIR" id="T21674">
    <property type="entry name" value="T21674"/>
</dbReference>
<dbReference type="RefSeq" id="NP_001250947.1">
    <molecule id="P91869-1"/>
    <property type="nucleotide sequence ID" value="NM_001264018.4"/>
</dbReference>
<dbReference type="RefSeq" id="NP_001250948.1">
    <molecule id="P91869-2"/>
    <property type="nucleotide sequence ID" value="NM_001264019.3"/>
</dbReference>
<dbReference type="RefSeq" id="NP_001250949.1">
    <property type="nucleotide sequence ID" value="NM_001264020.1"/>
</dbReference>
<dbReference type="SMR" id="P91869"/>
<dbReference type="BioGRID" id="49990">
    <property type="interactions" value="1"/>
</dbReference>
<dbReference type="FunCoup" id="P91869">
    <property type="interactions" value="2229"/>
</dbReference>
<dbReference type="IntAct" id="P91869">
    <property type="interactions" value="1"/>
</dbReference>
<dbReference type="STRING" id="6239.F32H2.2b.2"/>
<dbReference type="PaxDb" id="6239-F32H2.2b"/>
<dbReference type="EnsemblMetazoa" id="F32H2.2a.1">
    <molecule id="P91869-2"/>
    <property type="protein sequence ID" value="F32H2.2a.1"/>
    <property type="gene ID" value="WBGene00007026"/>
</dbReference>
<dbReference type="EnsemblMetazoa" id="F32H2.2b.1">
    <molecule id="P91869-1"/>
    <property type="protein sequence ID" value="F32H2.2b.1"/>
    <property type="gene ID" value="WBGene00007026"/>
</dbReference>
<dbReference type="GeneID" id="185213"/>
<dbReference type="KEGG" id="cel:CELE_F32H2.2"/>
<dbReference type="UCSC" id="F32H2.2">
    <molecule id="P91869-1"/>
    <property type="organism name" value="c. elegans"/>
</dbReference>
<dbReference type="AGR" id="WB:WBGene00007026"/>
<dbReference type="CTD" id="185213"/>
<dbReference type="WormBase" id="F32H2.2a">
    <molecule id="P91869-2"/>
    <property type="protein sequence ID" value="CE47616"/>
    <property type="gene ID" value="WBGene00007026"/>
    <property type="gene designation" value="mdt-31"/>
</dbReference>
<dbReference type="WormBase" id="F32H2.2b">
    <molecule id="P91869-1"/>
    <property type="protein sequence ID" value="CE47508"/>
    <property type="gene ID" value="WBGene00007026"/>
    <property type="gene designation" value="mdt-31"/>
</dbReference>
<dbReference type="eggNOG" id="KOG4086">
    <property type="taxonomic scope" value="Eukaryota"/>
</dbReference>
<dbReference type="GeneTree" id="ENSGT00390000015531"/>
<dbReference type="HOGENOM" id="CLU_071681_5_1_1"/>
<dbReference type="InParanoid" id="P91869"/>
<dbReference type="OMA" id="KRHRLCM"/>
<dbReference type="OrthoDB" id="10257739at2759"/>
<dbReference type="PhylomeDB" id="P91869"/>
<dbReference type="PRO" id="PR:P91869"/>
<dbReference type="Proteomes" id="UP000001940">
    <property type="component" value="Chromosome I"/>
</dbReference>
<dbReference type="Bgee" id="WBGene00007026">
    <property type="expression patterns" value="Expressed in embryo and 4 other cell types or tissues"/>
</dbReference>
<dbReference type="ExpressionAtlas" id="P91869">
    <property type="expression patterns" value="baseline and differential"/>
</dbReference>
<dbReference type="GO" id="GO:0070847">
    <property type="term" value="C:core mediator complex"/>
    <property type="evidence" value="ECO:0000318"/>
    <property type="project" value="GO_Central"/>
</dbReference>
<dbReference type="GO" id="GO:0016592">
    <property type="term" value="C:mediator complex"/>
    <property type="evidence" value="ECO:0000318"/>
    <property type="project" value="GO_Central"/>
</dbReference>
<dbReference type="GO" id="GO:0003712">
    <property type="term" value="F:transcription coregulator activity"/>
    <property type="evidence" value="ECO:0007669"/>
    <property type="project" value="InterPro"/>
</dbReference>
<dbReference type="GO" id="GO:0006357">
    <property type="term" value="P:regulation of transcription by RNA polymerase II"/>
    <property type="evidence" value="ECO:0000318"/>
    <property type="project" value="GO_Central"/>
</dbReference>
<dbReference type="FunFam" id="1.10.10.1340:FF:000001">
    <property type="entry name" value="Mediator of RNA polymerase II transcription subunit 31"/>
    <property type="match status" value="1"/>
</dbReference>
<dbReference type="Gene3D" id="1.10.10.1340">
    <property type="entry name" value="Mediator of RNA polymerase II, submodule Med31 (Soh1)"/>
    <property type="match status" value="1"/>
</dbReference>
<dbReference type="InterPro" id="IPR038089">
    <property type="entry name" value="Med31_sf"/>
</dbReference>
<dbReference type="InterPro" id="IPR008831">
    <property type="entry name" value="Mediator_Med31"/>
</dbReference>
<dbReference type="PANTHER" id="PTHR13186">
    <property type="entry name" value="MEDIATOR OF RNA POLYMERASE II TRANSCRIPTION SUBUNIT 31"/>
    <property type="match status" value="1"/>
</dbReference>
<dbReference type="Pfam" id="PF05669">
    <property type="entry name" value="Med31"/>
    <property type="match status" value="1"/>
</dbReference>
<comment type="function">
    <text evidence="1">Component of the Mediator complex, a coactivator involved in the regulated transcription of nearly all RNA polymerase II-dependent genes. Mediator functions as a bridge to convey information from gene-specific regulatory proteins to the basal RNA polymerase II transcription machinery. Mediator is recruited to promoters by direct interactions with regulatory proteins and serves as a scaffold for the assembly of a functional preinitiation complex with RNA polymerase II and the general transcription factors (By similarity).</text>
</comment>
<comment type="subunit">
    <text evidence="1">Component of the Mediator complex.</text>
</comment>
<comment type="subcellular location">
    <subcellularLocation>
        <location evidence="4">Nucleus</location>
    </subcellularLocation>
</comment>
<comment type="alternative products">
    <event type="alternative splicing"/>
    <isoform>
        <id>P91869-1</id>
        <name evidence="6">b</name>
        <sequence type="displayed"/>
    </isoform>
    <isoform>
        <id>P91869-2</id>
        <name evidence="5">a</name>
        <sequence type="described" ref="VSP_060782"/>
    </isoform>
</comment>
<comment type="similarity">
    <text evidence="4">Belongs to the Mediator complex subunit 31 family.</text>
</comment>